<gene>
    <name evidence="1" type="primary">infA</name>
    <name type="ordered locus">NGO_18211</name>
    <name type="ORF">NGO_1821.1</name>
</gene>
<accession>Q5F5U8</accession>
<name>IF1_NEIG1</name>
<feature type="chain" id="PRO_0000095831" description="Translation initiation factor IF-1">
    <location>
        <begin position="1"/>
        <end position="72"/>
    </location>
</feature>
<feature type="domain" description="S1-like" evidence="1">
    <location>
        <begin position="1"/>
        <end position="72"/>
    </location>
</feature>
<organism>
    <name type="scientific">Neisseria gonorrhoeae (strain ATCC 700825 / FA 1090)</name>
    <dbReference type="NCBI Taxonomy" id="242231"/>
    <lineage>
        <taxon>Bacteria</taxon>
        <taxon>Pseudomonadati</taxon>
        <taxon>Pseudomonadota</taxon>
        <taxon>Betaproteobacteria</taxon>
        <taxon>Neisseriales</taxon>
        <taxon>Neisseriaceae</taxon>
        <taxon>Neisseria</taxon>
    </lineage>
</organism>
<protein>
    <recommendedName>
        <fullName evidence="1">Translation initiation factor IF-1</fullName>
    </recommendedName>
</protein>
<comment type="function">
    <text evidence="1">One of the essential components for the initiation of protein synthesis. Stabilizes the binding of IF-2 and IF-3 on the 30S subunit to which N-formylmethionyl-tRNA(fMet) subsequently binds. Helps modulate mRNA selection, yielding the 30S pre-initiation complex (PIC). Upon addition of the 50S ribosomal subunit IF-1, IF-2 and IF-3 are released leaving the mature 70S translation initiation complex.</text>
</comment>
<comment type="subunit">
    <text evidence="1">Component of the 30S ribosomal translation pre-initiation complex which assembles on the 30S ribosome in the order IF-2 and IF-3, IF-1 and N-formylmethionyl-tRNA(fMet); mRNA recruitment can occur at any time during PIC assembly.</text>
</comment>
<comment type="subcellular location">
    <subcellularLocation>
        <location evidence="1">Cytoplasm</location>
    </subcellularLocation>
</comment>
<comment type="similarity">
    <text evidence="1">Belongs to the IF-1 family.</text>
</comment>
<dbReference type="EMBL" id="AE004969">
    <property type="protein sequence ID" value="AAW90439.1"/>
    <property type="molecule type" value="Genomic_DNA"/>
</dbReference>
<dbReference type="RefSeq" id="WP_002215452.1">
    <property type="nucleotide sequence ID" value="NC_002946.2"/>
</dbReference>
<dbReference type="RefSeq" id="YP_208851.1">
    <property type="nucleotide sequence ID" value="NC_002946.2"/>
</dbReference>
<dbReference type="PDB" id="9DCN">
    <property type="method" value="NMR"/>
    <property type="chains" value="A=1-72"/>
</dbReference>
<dbReference type="PDBsum" id="9DCN"/>
<dbReference type="SMR" id="Q5F5U8"/>
<dbReference type="STRING" id="242231.NGO_18211"/>
<dbReference type="GeneID" id="93387238"/>
<dbReference type="KEGG" id="ngo:NGO_18211"/>
<dbReference type="PATRIC" id="fig|242231.10.peg.2188"/>
<dbReference type="HOGENOM" id="CLU_151267_1_0_4"/>
<dbReference type="PRO" id="PR:Q5F5U8"/>
<dbReference type="Proteomes" id="UP000000535">
    <property type="component" value="Chromosome"/>
</dbReference>
<dbReference type="GO" id="GO:0005829">
    <property type="term" value="C:cytosol"/>
    <property type="evidence" value="ECO:0007669"/>
    <property type="project" value="TreeGrafter"/>
</dbReference>
<dbReference type="GO" id="GO:0043022">
    <property type="term" value="F:ribosome binding"/>
    <property type="evidence" value="ECO:0007669"/>
    <property type="project" value="UniProtKB-UniRule"/>
</dbReference>
<dbReference type="GO" id="GO:0019843">
    <property type="term" value="F:rRNA binding"/>
    <property type="evidence" value="ECO:0007669"/>
    <property type="project" value="UniProtKB-UniRule"/>
</dbReference>
<dbReference type="GO" id="GO:0003743">
    <property type="term" value="F:translation initiation factor activity"/>
    <property type="evidence" value="ECO:0007669"/>
    <property type="project" value="UniProtKB-UniRule"/>
</dbReference>
<dbReference type="CDD" id="cd04451">
    <property type="entry name" value="S1_IF1"/>
    <property type="match status" value="1"/>
</dbReference>
<dbReference type="FunFam" id="2.40.50.140:FF:000002">
    <property type="entry name" value="Translation initiation factor IF-1"/>
    <property type="match status" value="1"/>
</dbReference>
<dbReference type="Gene3D" id="2.40.50.140">
    <property type="entry name" value="Nucleic acid-binding proteins"/>
    <property type="match status" value="1"/>
</dbReference>
<dbReference type="HAMAP" id="MF_00075">
    <property type="entry name" value="IF_1"/>
    <property type="match status" value="1"/>
</dbReference>
<dbReference type="InterPro" id="IPR012340">
    <property type="entry name" value="NA-bd_OB-fold"/>
</dbReference>
<dbReference type="InterPro" id="IPR006196">
    <property type="entry name" value="RNA-binding_domain_S1_IF1"/>
</dbReference>
<dbReference type="InterPro" id="IPR004368">
    <property type="entry name" value="TIF_IF1"/>
</dbReference>
<dbReference type="NCBIfam" id="TIGR00008">
    <property type="entry name" value="infA"/>
    <property type="match status" value="1"/>
</dbReference>
<dbReference type="PANTHER" id="PTHR33370">
    <property type="entry name" value="TRANSLATION INITIATION FACTOR IF-1, CHLOROPLASTIC"/>
    <property type="match status" value="1"/>
</dbReference>
<dbReference type="PANTHER" id="PTHR33370:SF1">
    <property type="entry name" value="TRANSLATION INITIATION FACTOR IF-1, CHLOROPLASTIC"/>
    <property type="match status" value="1"/>
</dbReference>
<dbReference type="Pfam" id="PF01176">
    <property type="entry name" value="eIF-1a"/>
    <property type="match status" value="1"/>
</dbReference>
<dbReference type="SUPFAM" id="SSF50249">
    <property type="entry name" value="Nucleic acid-binding proteins"/>
    <property type="match status" value="1"/>
</dbReference>
<dbReference type="PROSITE" id="PS50832">
    <property type="entry name" value="S1_IF1_TYPE"/>
    <property type="match status" value="1"/>
</dbReference>
<sequence length="72" mass="8295">MAKEDTIQMQGEILETLPNATFKVKLENDHIVLGHISGKMRMHYIRISPGDKVTVELTPYDLTRARIVFRAR</sequence>
<reference key="1">
    <citation type="submission" date="2003-03" db="EMBL/GenBank/DDBJ databases">
        <title>The complete genome sequence of Neisseria gonorrhoeae.</title>
        <authorList>
            <person name="Lewis L.A."/>
            <person name="Gillaspy A.F."/>
            <person name="McLaughlin R.E."/>
            <person name="Gipson M."/>
            <person name="Ducey T.F."/>
            <person name="Ownbey T."/>
            <person name="Hartman K."/>
            <person name="Nydick C."/>
            <person name="Carson M.B."/>
            <person name="Vaughn J."/>
            <person name="Thomson C."/>
            <person name="Song L."/>
            <person name="Lin S."/>
            <person name="Yuan X."/>
            <person name="Najar F."/>
            <person name="Zhan M."/>
            <person name="Ren Q."/>
            <person name="Zhu H."/>
            <person name="Qi S."/>
            <person name="Kenton S.M."/>
            <person name="Lai H."/>
            <person name="White J.D."/>
            <person name="Clifton S."/>
            <person name="Roe B.A."/>
            <person name="Dyer D.W."/>
        </authorList>
    </citation>
    <scope>NUCLEOTIDE SEQUENCE [LARGE SCALE GENOMIC DNA]</scope>
    <source>
        <strain>ATCC 700825 / FA 1090</strain>
    </source>
</reference>
<proteinExistence type="evidence at protein level"/>
<keyword id="KW-0002">3D-structure</keyword>
<keyword id="KW-0963">Cytoplasm</keyword>
<keyword id="KW-0396">Initiation factor</keyword>
<keyword id="KW-0648">Protein biosynthesis</keyword>
<keyword id="KW-1185">Reference proteome</keyword>
<keyword id="KW-0694">RNA-binding</keyword>
<keyword id="KW-0699">rRNA-binding</keyword>
<evidence type="ECO:0000255" key="1">
    <source>
        <dbReference type="HAMAP-Rule" id="MF_00075"/>
    </source>
</evidence>